<feature type="chain" id="PRO_0000058846" description="Serine/threonine-protein phosphatase 2A catalytic subunit beta isoform">
    <location>
        <begin position="1"/>
        <end position="309"/>
    </location>
</feature>
<feature type="active site" description="Proton donor" evidence="1">
    <location>
        <position position="118"/>
    </location>
</feature>
<feature type="binding site" evidence="1">
    <location>
        <position position="57"/>
    </location>
    <ligand>
        <name>Mn(2+)</name>
        <dbReference type="ChEBI" id="CHEBI:29035"/>
        <label>1</label>
    </ligand>
</feature>
<feature type="binding site" evidence="1">
    <location>
        <position position="59"/>
    </location>
    <ligand>
        <name>Mn(2+)</name>
        <dbReference type="ChEBI" id="CHEBI:29035"/>
        <label>1</label>
    </ligand>
</feature>
<feature type="binding site" evidence="1">
    <location>
        <position position="85"/>
    </location>
    <ligand>
        <name>Mn(2+)</name>
        <dbReference type="ChEBI" id="CHEBI:29035"/>
        <label>1</label>
    </ligand>
</feature>
<feature type="binding site" evidence="1">
    <location>
        <position position="85"/>
    </location>
    <ligand>
        <name>Mn(2+)</name>
        <dbReference type="ChEBI" id="CHEBI:29035"/>
        <label>2</label>
    </ligand>
</feature>
<feature type="binding site" evidence="1">
    <location>
        <position position="117"/>
    </location>
    <ligand>
        <name>Mn(2+)</name>
        <dbReference type="ChEBI" id="CHEBI:29035"/>
        <label>2</label>
    </ligand>
</feature>
<feature type="binding site" evidence="1">
    <location>
        <position position="167"/>
    </location>
    <ligand>
        <name>Mn(2+)</name>
        <dbReference type="ChEBI" id="CHEBI:29035"/>
        <label>2</label>
    </ligand>
</feature>
<feature type="binding site" evidence="1">
    <location>
        <position position="241"/>
    </location>
    <ligand>
        <name>Mn(2+)</name>
        <dbReference type="ChEBI" id="CHEBI:29035"/>
        <label>2</label>
    </ligand>
</feature>
<feature type="modified residue" description="Phosphotyrosine" evidence="6">
    <location>
        <position position="307"/>
    </location>
</feature>
<feature type="modified residue" description="Leucine methyl ester" evidence="2">
    <location>
        <position position="309"/>
    </location>
</feature>
<feature type="mutagenesis site" description="Loss of trimeric subunit ABC assembly." evidence="4">
    <original>Y</original>
    <variation>Q</variation>
    <location>
        <position position="307"/>
    </location>
</feature>
<feature type="mutagenesis site" description="Loss of binding to PP2A B-alpha regulatory subunit." evidence="4">
    <original>L</original>
    <variation>A</variation>
    <location>
        <position position="309"/>
    </location>
</feature>
<feature type="mutagenesis site" description="Loss of trimeric subunit ABC assembly." evidence="4">
    <original>L</original>
    <variation>Q</variation>
    <location>
        <position position="309"/>
    </location>
</feature>
<sequence length="309" mass="35575">MDDKAFTKELDQWVEQLNECKQLNENQVRTLCEKAKEILTKESNVQEVRCPVTVCGDVHGQFHDLMELFRIGGKSPDTNYLFMGDYVDRGYYSVETVTLLVALKVRYPERITILRGNHESRQITQVYGFYDECLRKYGNANVWKYFTDLFDYLPLTALVDGQIFCLHGGLSPSIDTLDHIRALDRLQEVPHEGPMCDLLWSDPDDRGGWGISPRGAGYTFGQDISETFNHANGLTLVSRAHQLVMEGYNWCHDRNVVTIFSAPNYCYRCGNQAAIMELDDTLKYSFLQFDPAPRRGEPHVTRRTPDYFL</sequence>
<dbReference type="EC" id="3.1.3.16" evidence="2"/>
<dbReference type="EMBL" id="Z67746">
    <property type="protein sequence ID" value="CAA91559.1"/>
    <property type="molecule type" value="mRNA"/>
</dbReference>
<dbReference type="EMBL" id="BC058582">
    <property type="protein sequence ID" value="AAH58582.1"/>
    <property type="molecule type" value="mRNA"/>
</dbReference>
<dbReference type="CCDS" id="CCDS22233.1"/>
<dbReference type="RefSeq" id="NP_059070.1">
    <property type="nucleotide sequence ID" value="NM_017374.4"/>
</dbReference>
<dbReference type="SMR" id="P62715"/>
<dbReference type="BioGRID" id="202342">
    <property type="interactions" value="50"/>
</dbReference>
<dbReference type="CORUM" id="P62715"/>
<dbReference type="FunCoup" id="P62715">
    <property type="interactions" value="4064"/>
</dbReference>
<dbReference type="IntAct" id="P62715">
    <property type="interactions" value="7"/>
</dbReference>
<dbReference type="MINT" id="P62715"/>
<dbReference type="STRING" id="10090.ENSMUSP00000009774"/>
<dbReference type="GlyGen" id="P62715">
    <property type="glycosylation" value="1 site, 1 O-linked glycan (1 site)"/>
</dbReference>
<dbReference type="iPTMnet" id="P62715"/>
<dbReference type="PhosphoSitePlus" id="P62715"/>
<dbReference type="SwissPalm" id="P62715"/>
<dbReference type="jPOST" id="P62715"/>
<dbReference type="PaxDb" id="10090-ENSMUSP00000009774"/>
<dbReference type="PeptideAtlas" id="P62715"/>
<dbReference type="ProteomicsDB" id="291778"/>
<dbReference type="Pumba" id="P62715"/>
<dbReference type="Antibodypedia" id="4349">
    <property type="antibodies" value="418 antibodies from 33 providers"/>
</dbReference>
<dbReference type="DNASU" id="19053"/>
<dbReference type="Ensembl" id="ENSMUST00000009774.11">
    <property type="protein sequence ID" value="ENSMUSP00000009774.10"/>
    <property type="gene ID" value="ENSMUSG00000009630.11"/>
</dbReference>
<dbReference type="GeneID" id="19053"/>
<dbReference type="KEGG" id="mmu:19053"/>
<dbReference type="UCSC" id="uc009lkd.1">
    <property type="organism name" value="mouse"/>
</dbReference>
<dbReference type="AGR" id="MGI:1321161"/>
<dbReference type="CTD" id="5516"/>
<dbReference type="MGI" id="MGI:1321161">
    <property type="gene designation" value="Ppp2cb"/>
</dbReference>
<dbReference type="VEuPathDB" id="HostDB:ENSMUSG00000009630"/>
<dbReference type="eggNOG" id="KOG0371">
    <property type="taxonomic scope" value="Eukaryota"/>
</dbReference>
<dbReference type="GeneTree" id="ENSGT00550000074618"/>
<dbReference type="HOGENOM" id="CLU_004962_0_5_1"/>
<dbReference type="InParanoid" id="P62715"/>
<dbReference type="OMA" id="YRCENQA"/>
<dbReference type="OrthoDB" id="1930084at2759"/>
<dbReference type="PhylomeDB" id="P62715"/>
<dbReference type="TreeFam" id="TF105559"/>
<dbReference type="Reactome" id="R-MMU-113501">
    <property type="pathway name" value="Inhibition of replication initiation of damaged DNA by RB1/E2F1"/>
</dbReference>
<dbReference type="Reactome" id="R-MMU-1295596">
    <property type="pathway name" value="Spry regulation of FGF signaling"/>
</dbReference>
<dbReference type="Reactome" id="R-MMU-141444">
    <property type="pathway name" value="Amplification of signal from unattached kinetochores via a MAD2 inhibitory signal"/>
</dbReference>
<dbReference type="Reactome" id="R-MMU-180024">
    <property type="pathway name" value="DARPP-32 events"/>
</dbReference>
<dbReference type="Reactome" id="R-MMU-195253">
    <property type="pathway name" value="Degradation of beta-catenin by the destruction complex"/>
</dbReference>
<dbReference type="Reactome" id="R-MMU-196299">
    <property type="pathway name" value="Beta-catenin phosphorylation cascade"/>
</dbReference>
<dbReference type="Reactome" id="R-MMU-198753">
    <property type="pathway name" value="ERK/MAPK targets"/>
</dbReference>
<dbReference type="Reactome" id="R-MMU-202670">
    <property type="pathway name" value="ERKs are inactivated"/>
</dbReference>
<dbReference type="Reactome" id="R-MMU-2467813">
    <property type="pathway name" value="Separation of Sister Chromatids"/>
</dbReference>
<dbReference type="Reactome" id="R-MMU-2500257">
    <property type="pathway name" value="Resolution of Sister Chromatid Cohesion"/>
</dbReference>
<dbReference type="Reactome" id="R-MMU-389356">
    <property type="pathway name" value="Co-stimulation by CD28"/>
</dbReference>
<dbReference type="Reactome" id="R-MMU-389513">
    <property type="pathway name" value="Co-inhibition by CTLA4"/>
</dbReference>
<dbReference type="Reactome" id="R-MMU-432142">
    <property type="pathway name" value="Platelet sensitization by LDL"/>
</dbReference>
<dbReference type="Reactome" id="R-MMU-4641262">
    <property type="pathway name" value="Disassembly of the destruction complex and recruitment of AXIN to the membrane"/>
</dbReference>
<dbReference type="Reactome" id="R-MMU-5663220">
    <property type="pathway name" value="RHO GTPases Activate Formins"/>
</dbReference>
<dbReference type="Reactome" id="R-MMU-5673000">
    <property type="pathway name" value="RAF activation"/>
</dbReference>
<dbReference type="Reactome" id="R-MMU-5675221">
    <property type="pathway name" value="Negative regulation of MAPK pathway"/>
</dbReference>
<dbReference type="Reactome" id="R-MMU-6804757">
    <property type="pathway name" value="Regulation of TP53 Degradation"/>
</dbReference>
<dbReference type="Reactome" id="R-MMU-6811558">
    <property type="pathway name" value="PI5P, PP2A and IER3 Regulate PI3K/AKT Signaling"/>
</dbReference>
<dbReference type="Reactome" id="R-MMU-68877">
    <property type="pathway name" value="Mitotic Prometaphase"/>
</dbReference>
<dbReference type="Reactome" id="R-MMU-69231">
    <property type="pathway name" value="Cyclin D associated events in G1"/>
</dbReference>
<dbReference type="Reactome" id="R-MMU-69273">
    <property type="pathway name" value="Cyclin A/B1/B2 associated events during G2/M transition"/>
</dbReference>
<dbReference type="Reactome" id="R-MMU-9648025">
    <property type="pathway name" value="EML4 and NUDC in mitotic spindle formation"/>
</dbReference>
<dbReference type="Reactome" id="R-MMU-9833482">
    <property type="pathway name" value="PKR-mediated signaling"/>
</dbReference>
<dbReference type="BioGRID-ORCS" id="19053">
    <property type="hits" value="3 hits in 78 CRISPR screens"/>
</dbReference>
<dbReference type="ChiTaRS" id="Ppp2cb">
    <property type="organism name" value="mouse"/>
</dbReference>
<dbReference type="PRO" id="PR:P62715"/>
<dbReference type="Proteomes" id="UP000000589">
    <property type="component" value="Chromosome 8"/>
</dbReference>
<dbReference type="RNAct" id="P62715">
    <property type="molecule type" value="protein"/>
</dbReference>
<dbReference type="Bgee" id="ENSMUSG00000009630">
    <property type="expression patterns" value="Expressed in spermatid and 263 other cell types or tissues"/>
</dbReference>
<dbReference type="GO" id="GO:0000775">
    <property type="term" value="C:chromosome, centromeric region"/>
    <property type="evidence" value="ECO:0007669"/>
    <property type="project" value="UniProtKB-SubCell"/>
</dbReference>
<dbReference type="GO" id="GO:0005737">
    <property type="term" value="C:cytoplasm"/>
    <property type="evidence" value="ECO:0000314"/>
    <property type="project" value="MGI"/>
</dbReference>
<dbReference type="GO" id="GO:0005829">
    <property type="term" value="C:cytosol"/>
    <property type="evidence" value="ECO:0000304"/>
    <property type="project" value="Reactome"/>
</dbReference>
<dbReference type="GO" id="GO:0090443">
    <property type="term" value="C:FAR/SIN/STRIPAK complex"/>
    <property type="evidence" value="ECO:0000250"/>
    <property type="project" value="UniProtKB"/>
</dbReference>
<dbReference type="GO" id="GO:0005634">
    <property type="term" value="C:nucleus"/>
    <property type="evidence" value="ECO:0000304"/>
    <property type="project" value="MGI"/>
</dbReference>
<dbReference type="GO" id="GO:0000159">
    <property type="term" value="C:protein phosphatase type 2A complex"/>
    <property type="evidence" value="ECO:0000314"/>
    <property type="project" value="MGI"/>
</dbReference>
<dbReference type="GO" id="GO:0000922">
    <property type="term" value="C:spindle pole"/>
    <property type="evidence" value="ECO:0007669"/>
    <property type="project" value="UniProtKB-SubCell"/>
</dbReference>
<dbReference type="GO" id="GO:0046872">
    <property type="term" value="F:metal ion binding"/>
    <property type="evidence" value="ECO:0007669"/>
    <property type="project" value="UniProtKB-KW"/>
</dbReference>
<dbReference type="GO" id="GO:0004722">
    <property type="term" value="F:protein serine/threonine phosphatase activity"/>
    <property type="evidence" value="ECO:0007669"/>
    <property type="project" value="UniProtKB-EC"/>
</dbReference>
<dbReference type="GO" id="GO:0044325">
    <property type="term" value="F:transmembrane transporter binding"/>
    <property type="evidence" value="ECO:0007669"/>
    <property type="project" value="Ensembl"/>
</dbReference>
<dbReference type="GO" id="GO:0008637">
    <property type="term" value="P:apoptotic mitochondrial changes"/>
    <property type="evidence" value="ECO:0000315"/>
    <property type="project" value="MGI"/>
</dbReference>
<dbReference type="GO" id="GO:0043124">
    <property type="term" value="P:negative regulation of canonical NF-kappaB signal transduction"/>
    <property type="evidence" value="ECO:0007669"/>
    <property type="project" value="Ensembl"/>
</dbReference>
<dbReference type="GO" id="GO:0010629">
    <property type="term" value="P:negative regulation of gene expression"/>
    <property type="evidence" value="ECO:0007669"/>
    <property type="project" value="Ensembl"/>
</dbReference>
<dbReference type="GO" id="GO:0046580">
    <property type="term" value="P:negative regulation of Ras protein signal transduction"/>
    <property type="evidence" value="ECO:0007669"/>
    <property type="project" value="Ensembl"/>
</dbReference>
<dbReference type="GO" id="GO:0010804">
    <property type="term" value="P:negative regulation of tumor necrosis factor-mediated signaling pathway"/>
    <property type="evidence" value="ECO:0007669"/>
    <property type="project" value="Ensembl"/>
</dbReference>
<dbReference type="GO" id="GO:0043161">
    <property type="term" value="P:proteasome-mediated ubiquitin-dependent protein catabolic process"/>
    <property type="evidence" value="ECO:0000315"/>
    <property type="project" value="MGI"/>
</dbReference>
<dbReference type="GO" id="GO:0010468">
    <property type="term" value="P:regulation of gene expression"/>
    <property type="evidence" value="ECO:0000315"/>
    <property type="project" value="MGI"/>
</dbReference>
<dbReference type="GO" id="GO:0031113">
    <property type="term" value="P:regulation of microtubule polymerization"/>
    <property type="evidence" value="ECO:0007669"/>
    <property type="project" value="Ensembl"/>
</dbReference>
<dbReference type="GO" id="GO:0046677">
    <property type="term" value="P:response to antibiotic"/>
    <property type="evidence" value="ECO:0000315"/>
    <property type="project" value="MGI"/>
</dbReference>
<dbReference type="GO" id="GO:0034976">
    <property type="term" value="P:response to endoplasmic reticulum stress"/>
    <property type="evidence" value="ECO:0000315"/>
    <property type="project" value="MGI"/>
</dbReference>
<dbReference type="GO" id="GO:0042542">
    <property type="term" value="P:response to hydrogen peroxide"/>
    <property type="evidence" value="ECO:0000315"/>
    <property type="project" value="MGI"/>
</dbReference>
<dbReference type="GO" id="GO:0010288">
    <property type="term" value="P:response to lead ion"/>
    <property type="evidence" value="ECO:0007669"/>
    <property type="project" value="Ensembl"/>
</dbReference>
<dbReference type="CDD" id="cd07415">
    <property type="entry name" value="MPP_PP2A_PP4_PP6"/>
    <property type="match status" value="1"/>
</dbReference>
<dbReference type="FunFam" id="3.60.21.10:FF:000003">
    <property type="entry name" value="Serine/threonine-protein phosphatase"/>
    <property type="match status" value="1"/>
</dbReference>
<dbReference type="Gene3D" id="3.60.21.10">
    <property type="match status" value="1"/>
</dbReference>
<dbReference type="InterPro" id="IPR004843">
    <property type="entry name" value="Calcineurin-like_PHP_ApaH"/>
</dbReference>
<dbReference type="InterPro" id="IPR029052">
    <property type="entry name" value="Metallo-depent_PP-like"/>
</dbReference>
<dbReference type="InterPro" id="IPR047129">
    <property type="entry name" value="PPA2-like"/>
</dbReference>
<dbReference type="InterPro" id="IPR006186">
    <property type="entry name" value="Ser/Thr-sp_prot-phosphatase"/>
</dbReference>
<dbReference type="PANTHER" id="PTHR45619">
    <property type="entry name" value="SERINE/THREONINE-PROTEIN PHOSPHATASE PP2A-RELATED"/>
    <property type="match status" value="1"/>
</dbReference>
<dbReference type="Pfam" id="PF00149">
    <property type="entry name" value="Metallophos"/>
    <property type="match status" value="1"/>
</dbReference>
<dbReference type="PRINTS" id="PR00114">
    <property type="entry name" value="STPHPHTASE"/>
</dbReference>
<dbReference type="SMART" id="SM00156">
    <property type="entry name" value="PP2Ac"/>
    <property type="match status" value="1"/>
</dbReference>
<dbReference type="SUPFAM" id="SSF56300">
    <property type="entry name" value="Metallo-dependent phosphatases"/>
    <property type="match status" value="1"/>
</dbReference>
<dbReference type="PROSITE" id="PS00125">
    <property type="entry name" value="SER_THR_PHOSPHATASE"/>
    <property type="match status" value="1"/>
</dbReference>
<comment type="function">
    <text evidence="2">Catalytic subunit of protein phosphatase 2A (PP2A), a serine/threonine phosphatase involved in the regulation of a wide variety of enzymes, signal transduction pathways, and cellular events. PP2A can modulate the activity of phosphorylase B kinase, casein kinase 2, mitogen-stimulated S6 kinase, and MAP-2 kinase. Part of the striatin-interacting phosphatase and kinase (STRIPAK) complexes. STRIPAK complexes have critical roles in protein (de)phosphorylation and are regulators of multiple signaling pathways including Hippo, MAPK, nuclear receptor and cytoskeleton remodeling. Different types of STRIPAK complexes are involved in a variety of biological processes such as cell growth, differentiation, apoptosis, metabolism and immune regulation.</text>
</comment>
<comment type="catalytic activity">
    <reaction evidence="2">
        <text>O-phospho-L-seryl-[protein] + H2O = L-seryl-[protein] + phosphate</text>
        <dbReference type="Rhea" id="RHEA:20629"/>
        <dbReference type="Rhea" id="RHEA-COMP:9863"/>
        <dbReference type="Rhea" id="RHEA-COMP:11604"/>
        <dbReference type="ChEBI" id="CHEBI:15377"/>
        <dbReference type="ChEBI" id="CHEBI:29999"/>
        <dbReference type="ChEBI" id="CHEBI:43474"/>
        <dbReference type="ChEBI" id="CHEBI:83421"/>
        <dbReference type="EC" id="3.1.3.16"/>
    </reaction>
    <physiologicalReaction direction="left-to-right" evidence="2">
        <dbReference type="Rhea" id="RHEA:20630"/>
    </physiologicalReaction>
</comment>
<comment type="catalytic activity">
    <reaction evidence="2">
        <text>O-phospho-L-threonyl-[protein] + H2O = L-threonyl-[protein] + phosphate</text>
        <dbReference type="Rhea" id="RHEA:47004"/>
        <dbReference type="Rhea" id="RHEA-COMP:11060"/>
        <dbReference type="Rhea" id="RHEA-COMP:11605"/>
        <dbReference type="ChEBI" id="CHEBI:15377"/>
        <dbReference type="ChEBI" id="CHEBI:30013"/>
        <dbReference type="ChEBI" id="CHEBI:43474"/>
        <dbReference type="ChEBI" id="CHEBI:61977"/>
        <dbReference type="EC" id="3.1.3.16"/>
    </reaction>
    <physiologicalReaction direction="left-to-right" evidence="2">
        <dbReference type="Rhea" id="RHEA:47005"/>
    </physiologicalReaction>
</comment>
<comment type="cofactor">
    <cofactor evidence="1">
        <name>Mn(2+)</name>
        <dbReference type="ChEBI" id="CHEBI:29035"/>
    </cofactor>
    <text evidence="1">Binds 2 manganese ions per subunit.</text>
</comment>
<comment type="subunit">
    <text evidence="2 3">PP2A consists of a common heterodimeric core enzyme (composed of a 36 kDa catalytic subunit (subunit C) and a 65 kDa constant regulatory subunit (PR65) (subunit A)) that associates with a variety of regulatory subunits. Proteins that associate with the core dimer include three families of regulatory subunits B (the R2/B/PR55/B55, R3/B''/PR72/PR130/PR59 and R5/B'/B56 families), the 48 kDa variable regulatory subunit, viral proteins, and cell signaling molecules. Binds PPME1. May indirectly interact with SGO1, most probably through regulatory B56 subunits. Interacts with CTTNBP2NL. Interacts with PTPA (By similarity). Found in a complex with at least ARL2, PPP2CB, PPP2R1A, PPP2R2A, PPP2R5E and TBCD. Interacts with TBCD (By similarity). Part of the core of STRIPAK complexes composed of PP2A catalytic and scaffolding subunits, the striatins (PP2A regulatory subunits), the striatin-associated proteins MOB4, STRIP1 and STRIP2, PDCD10 and members of the STE20 kinases, such as STK24 and STK26 (By similarity).</text>
</comment>
<comment type="subcellular location">
    <subcellularLocation>
        <location evidence="2">Cytoplasm</location>
    </subcellularLocation>
    <subcellularLocation>
        <location evidence="2">Nucleus</location>
    </subcellularLocation>
    <subcellularLocation>
        <location evidence="2">Chromosome</location>
        <location evidence="2">Centromere</location>
    </subcellularLocation>
    <subcellularLocation>
        <location evidence="2">Cytoplasm</location>
        <location evidence="2">Cytoskeleton</location>
        <location evidence="2">Spindle pole</location>
    </subcellularLocation>
    <text evidence="2">In prometaphase cells, but not in anaphase cells, localizes at centromeres. During mitosis, also found at spindle poles.</text>
</comment>
<comment type="PTM">
    <text evidence="1">Reversibly methyl esterified on Leu-309 by leucine carboxyl methyltransferase 1 (Lcmt1) and protein phosphatase methylesterase 1 (Ppme1). Carboxyl methylation influences the affinity of the catalytic subunit for the different regulatory subunits, thereby modulating the PP2A holoenzyme's substrate specificity, enzyme activity and cellular localization (By similarity).</text>
</comment>
<comment type="PTM">
    <text evidence="1">Phosphorylation of either threonine (by autophosphorylation-activated protein kinase) or tyrosine results in inactivation of the phosphatase. Auto-dephosphorylation has been suggested as a mechanism for reactivation (By similarity).</text>
</comment>
<comment type="PTM">
    <text evidence="5">May be monoubiquitinated by NOSIP.</text>
</comment>
<comment type="similarity">
    <text evidence="7">Belongs to the PPP phosphatase family. PP-1 subfamily.</text>
</comment>
<proteinExistence type="evidence at protein level"/>
<name>PP2AB_MOUSE</name>
<keyword id="KW-0137">Centromere</keyword>
<keyword id="KW-0158">Chromosome</keyword>
<keyword id="KW-0963">Cytoplasm</keyword>
<keyword id="KW-0206">Cytoskeleton</keyword>
<keyword id="KW-0903">Direct protein sequencing</keyword>
<keyword id="KW-0378">Hydrolase</keyword>
<keyword id="KW-0464">Manganese</keyword>
<keyword id="KW-0479">Metal-binding</keyword>
<keyword id="KW-0488">Methylation</keyword>
<keyword id="KW-0539">Nucleus</keyword>
<keyword id="KW-0597">Phosphoprotein</keyword>
<keyword id="KW-0904">Protein phosphatase</keyword>
<keyword id="KW-1185">Reference proteome</keyword>
<keyword id="KW-0832">Ubl conjugation</keyword>
<evidence type="ECO:0000250" key="1"/>
<evidence type="ECO:0000250" key="2">
    <source>
        <dbReference type="UniProtKB" id="P62714"/>
    </source>
</evidence>
<evidence type="ECO:0000250" key="3">
    <source>
        <dbReference type="UniProtKB" id="Q0P594"/>
    </source>
</evidence>
<evidence type="ECO:0000269" key="4">
    <source>
    </source>
</evidence>
<evidence type="ECO:0000269" key="5">
    <source>
    </source>
</evidence>
<evidence type="ECO:0000269" key="6">
    <source>
    </source>
</evidence>
<evidence type="ECO:0000305" key="7"/>
<reference key="1">
    <citation type="submission" date="1996-04" db="EMBL/GenBank/DDBJ databases">
        <authorList>
            <person name="Goetz J.M."/>
            <person name="Kues W."/>
        </authorList>
    </citation>
    <scope>NUCLEOTIDE SEQUENCE [MRNA]</scope>
    <source>
        <strain>C57BL/6 X DBA/2</strain>
        <tissue>Brain</tissue>
    </source>
</reference>
<reference key="2">
    <citation type="journal article" date="2004" name="Genome Res.">
        <title>The status, quality, and expansion of the NIH full-length cDNA project: the Mammalian Gene Collection (MGC).</title>
        <authorList>
            <consortium name="The MGC Project Team"/>
        </authorList>
    </citation>
    <scope>NUCLEOTIDE SEQUENCE [LARGE SCALE MRNA]</scope>
    <source>
        <strain>FVB/N-3</strain>
        <tissue>Mammary gland</tissue>
    </source>
</reference>
<reference key="3">
    <citation type="journal article" date="1994" name="J. Biol. Chem.">
        <title>Molecular cloning of a protein serine/threonine phosphatase containing a putative regulatory tetratricopeptide repeat domain.</title>
        <authorList>
            <person name="Becker W."/>
            <person name="Kentrup H."/>
            <person name="Klumpp S."/>
            <person name="Schultz J.E."/>
            <person name="Joost H.G."/>
        </authorList>
    </citation>
    <scope>NUCLEOTIDE SEQUENCE [MRNA] OF 62-83</scope>
</reference>
<reference key="4">
    <citation type="submission" date="2007-03" db="UniProtKB">
        <authorList>
            <person name="Lubec G."/>
            <person name="Klug S."/>
        </authorList>
    </citation>
    <scope>PROTEIN SEQUENCE OF 284-294</scope>
    <scope>IDENTIFICATION BY MASS SPECTROMETRY</scope>
    <source>
        <tissue>Hippocampus</tissue>
    </source>
</reference>
<reference key="5">
    <citation type="journal article" date="1994" name="J. Biol. Chem.">
        <title>Tyrosine phosphorylation of protein phosphatase 2A in response to growth stimulation and v-src transformation of fibroblasts.</title>
        <authorList>
            <person name="Chen J."/>
            <person name="Parsons S."/>
            <person name="Brautigan D.L."/>
        </authorList>
    </citation>
    <scope>PHOSPHORYLATION AT TYR-307</scope>
</reference>
<reference key="6">
    <citation type="journal article" date="1999" name="Biochemistry">
        <title>Mutation of Tyr307 and Leu309 in the protein phosphatase 2A catalytic subunit favors association with the alpha 4 subunit which promotes dephosphorylation of elongation factor-2.</title>
        <authorList>
            <person name="Chung H."/>
            <person name="Nairn A.C."/>
            <person name="Murata K."/>
            <person name="Brautigan D.L."/>
        </authorList>
    </citation>
    <scope>MUTAGENESIS OF TYR-307 AND LEU-309</scope>
</reference>
<reference key="7">
    <citation type="journal article" date="2010" name="Cell">
        <title>A tissue-specific atlas of mouse protein phosphorylation and expression.</title>
        <authorList>
            <person name="Huttlin E.L."/>
            <person name="Jedrychowski M.P."/>
            <person name="Elias J.E."/>
            <person name="Goswami T."/>
            <person name="Rad R."/>
            <person name="Beausoleil S.A."/>
            <person name="Villen J."/>
            <person name="Haas W."/>
            <person name="Sowa M.E."/>
            <person name="Gygi S.P."/>
        </authorList>
    </citation>
    <scope>IDENTIFICATION BY MASS SPECTROMETRY [LARGE SCALE ANALYSIS]</scope>
    <source>
        <tissue>Brain</tissue>
        <tissue>Lung</tissue>
        <tissue>Pancreas</tissue>
        <tissue>Spleen</tissue>
        <tissue>Testis</tissue>
    </source>
</reference>
<reference key="8">
    <citation type="journal article" date="2014" name="PLoS ONE">
        <title>The ubiquitin E3 ligase NOSIP modulates protein phosphatase 2A activity in craniofacial development.</title>
        <authorList>
            <person name="Hoffmeister M."/>
            <person name="Prelle C."/>
            <person name="Kuechler P."/>
            <person name="Kovacevic I."/>
            <person name="Moser M."/>
            <person name="Mueller-Esterl W."/>
            <person name="Oess S."/>
        </authorList>
    </citation>
    <scope>MONUBIQUITINATION BY NOSIP</scope>
</reference>
<accession>P62715</accession>
<accession>P11082</accession>
<gene>
    <name type="primary">Ppp2cb</name>
</gene>
<organism>
    <name type="scientific">Mus musculus</name>
    <name type="common">Mouse</name>
    <dbReference type="NCBI Taxonomy" id="10090"/>
    <lineage>
        <taxon>Eukaryota</taxon>
        <taxon>Metazoa</taxon>
        <taxon>Chordata</taxon>
        <taxon>Craniata</taxon>
        <taxon>Vertebrata</taxon>
        <taxon>Euteleostomi</taxon>
        <taxon>Mammalia</taxon>
        <taxon>Eutheria</taxon>
        <taxon>Euarchontoglires</taxon>
        <taxon>Glires</taxon>
        <taxon>Rodentia</taxon>
        <taxon>Myomorpha</taxon>
        <taxon>Muroidea</taxon>
        <taxon>Muridae</taxon>
        <taxon>Murinae</taxon>
        <taxon>Mus</taxon>
        <taxon>Mus</taxon>
    </lineage>
</organism>
<protein>
    <recommendedName>
        <fullName>Serine/threonine-protein phosphatase 2A catalytic subunit beta isoform</fullName>
        <shortName>PP2A-beta</shortName>
        <ecNumber evidence="2">3.1.3.16</ecNumber>
    </recommendedName>
</protein>